<organism>
    <name type="scientific">Citrifermentans bemidjiense (strain ATCC BAA-1014 / DSM 16622 / JCM 12645 / Bem)</name>
    <name type="common">Geobacter bemidjiensis</name>
    <dbReference type="NCBI Taxonomy" id="404380"/>
    <lineage>
        <taxon>Bacteria</taxon>
        <taxon>Pseudomonadati</taxon>
        <taxon>Thermodesulfobacteriota</taxon>
        <taxon>Desulfuromonadia</taxon>
        <taxon>Geobacterales</taxon>
        <taxon>Geobacteraceae</taxon>
        <taxon>Citrifermentans</taxon>
    </lineage>
</organism>
<dbReference type="EC" id="4.1.1.37" evidence="1"/>
<dbReference type="EMBL" id="CP001124">
    <property type="protein sequence ID" value="ACH37047.1"/>
    <property type="molecule type" value="Genomic_DNA"/>
</dbReference>
<dbReference type="RefSeq" id="WP_012528457.1">
    <property type="nucleotide sequence ID" value="NC_011146.1"/>
</dbReference>
<dbReference type="SMR" id="B5E7R1"/>
<dbReference type="STRING" id="404380.Gbem_0016"/>
<dbReference type="KEGG" id="gbm:Gbem_0016"/>
<dbReference type="eggNOG" id="COG0407">
    <property type="taxonomic scope" value="Bacteria"/>
</dbReference>
<dbReference type="HOGENOM" id="CLU_040933_0_1_7"/>
<dbReference type="OrthoDB" id="9806656at2"/>
<dbReference type="UniPathway" id="UPA00251">
    <property type="reaction ID" value="UER00321"/>
</dbReference>
<dbReference type="Proteomes" id="UP000008825">
    <property type="component" value="Chromosome"/>
</dbReference>
<dbReference type="GO" id="GO:0005829">
    <property type="term" value="C:cytosol"/>
    <property type="evidence" value="ECO:0007669"/>
    <property type="project" value="TreeGrafter"/>
</dbReference>
<dbReference type="GO" id="GO:0004853">
    <property type="term" value="F:uroporphyrinogen decarboxylase activity"/>
    <property type="evidence" value="ECO:0007669"/>
    <property type="project" value="UniProtKB-UniRule"/>
</dbReference>
<dbReference type="GO" id="GO:0019353">
    <property type="term" value="P:protoporphyrinogen IX biosynthetic process from glutamate"/>
    <property type="evidence" value="ECO:0007669"/>
    <property type="project" value="TreeGrafter"/>
</dbReference>
<dbReference type="CDD" id="cd00717">
    <property type="entry name" value="URO-D"/>
    <property type="match status" value="1"/>
</dbReference>
<dbReference type="FunFam" id="3.20.20.210:FF:000007">
    <property type="entry name" value="Uroporphyrinogen decarboxylase"/>
    <property type="match status" value="1"/>
</dbReference>
<dbReference type="Gene3D" id="3.20.20.210">
    <property type="match status" value="1"/>
</dbReference>
<dbReference type="HAMAP" id="MF_00218">
    <property type="entry name" value="URO_D"/>
    <property type="match status" value="1"/>
</dbReference>
<dbReference type="InterPro" id="IPR038071">
    <property type="entry name" value="UROD/MetE-like_sf"/>
</dbReference>
<dbReference type="InterPro" id="IPR006361">
    <property type="entry name" value="Uroporphyrinogen_deCO2ase_HemE"/>
</dbReference>
<dbReference type="InterPro" id="IPR000257">
    <property type="entry name" value="Uroporphyrinogen_deCOase"/>
</dbReference>
<dbReference type="NCBIfam" id="TIGR01464">
    <property type="entry name" value="hemE"/>
    <property type="match status" value="1"/>
</dbReference>
<dbReference type="PANTHER" id="PTHR21091">
    <property type="entry name" value="METHYLTETRAHYDROFOLATE:HOMOCYSTEINE METHYLTRANSFERASE RELATED"/>
    <property type="match status" value="1"/>
</dbReference>
<dbReference type="PANTHER" id="PTHR21091:SF169">
    <property type="entry name" value="UROPORPHYRINOGEN DECARBOXYLASE"/>
    <property type="match status" value="1"/>
</dbReference>
<dbReference type="Pfam" id="PF01208">
    <property type="entry name" value="URO-D"/>
    <property type="match status" value="1"/>
</dbReference>
<dbReference type="SUPFAM" id="SSF51726">
    <property type="entry name" value="UROD/MetE-like"/>
    <property type="match status" value="1"/>
</dbReference>
<dbReference type="PROSITE" id="PS00906">
    <property type="entry name" value="UROD_1"/>
    <property type="match status" value="1"/>
</dbReference>
<dbReference type="PROSITE" id="PS00907">
    <property type="entry name" value="UROD_2"/>
    <property type="match status" value="1"/>
</dbReference>
<proteinExistence type="inferred from homology"/>
<feature type="chain" id="PRO_1000099994" description="Uroporphyrinogen decarboxylase">
    <location>
        <begin position="1"/>
        <end position="339"/>
    </location>
</feature>
<feature type="binding site" evidence="1">
    <location>
        <begin position="23"/>
        <end position="27"/>
    </location>
    <ligand>
        <name>substrate</name>
    </ligand>
</feature>
<feature type="binding site" evidence="1">
    <location>
        <position position="72"/>
    </location>
    <ligand>
        <name>substrate</name>
    </ligand>
</feature>
<feature type="binding site" evidence="1">
    <location>
        <position position="147"/>
    </location>
    <ligand>
        <name>substrate</name>
    </ligand>
</feature>
<feature type="binding site" evidence="1">
    <location>
        <position position="202"/>
    </location>
    <ligand>
        <name>substrate</name>
    </ligand>
</feature>
<feature type="binding site" evidence="1">
    <location>
        <position position="315"/>
    </location>
    <ligand>
        <name>substrate</name>
    </ligand>
</feature>
<feature type="site" description="Transition state stabilizer" evidence="1">
    <location>
        <position position="72"/>
    </location>
</feature>
<comment type="function">
    <text evidence="1">Catalyzes the decarboxylation of four acetate groups of uroporphyrinogen-III to yield coproporphyrinogen-III.</text>
</comment>
<comment type="catalytic activity">
    <reaction evidence="1">
        <text>uroporphyrinogen III + 4 H(+) = coproporphyrinogen III + 4 CO2</text>
        <dbReference type="Rhea" id="RHEA:19865"/>
        <dbReference type="ChEBI" id="CHEBI:15378"/>
        <dbReference type="ChEBI" id="CHEBI:16526"/>
        <dbReference type="ChEBI" id="CHEBI:57308"/>
        <dbReference type="ChEBI" id="CHEBI:57309"/>
        <dbReference type="EC" id="4.1.1.37"/>
    </reaction>
</comment>
<comment type="pathway">
    <text evidence="1">Porphyrin-containing compound metabolism; protoporphyrin-IX biosynthesis; coproporphyrinogen-III from 5-aminolevulinate: step 4/4.</text>
</comment>
<comment type="subunit">
    <text evidence="1">Homodimer.</text>
</comment>
<comment type="subcellular location">
    <subcellularLocation>
        <location evidence="1">Cytoplasm</location>
    </subcellularLocation>
</comment>
<comment type="similarity">
    <text evidence="1">Belongs to the uroporphyrinogen decarboxylase family.</text>
</comment>
<name>DCUP_CITBB</name>
<gene>
    <name evidence="1" type="primary">hemE</name>
    <name type="ordered locus">Gbem_0016</name>
</gene>
<protein>
    <recommendedName>
        <fullName evidence="1">Uroporphyrinogen decarboxylase</fullName>
        <shortName evidence="1">UPD</shortName>
        <shortName evidence="1">URO-D</shortName>
        <ecNumber evidence="1">4.1.1.37</ecNumber>
    </recommendedName>
</protein>
<reference key="1">
    <citation type="submission" date="2008-07" db="EMBL/GenBank/DDBJ databases">
        <title>Complete sequence of Geobacter bemidjiensis BEM.</title>
        <authorList>
            <consortium name="US DOE Joint Genome Institute"/>
            <person name="Lucas S."/>
            <person name="Copeland A."/>
            <person name="Lapidus A."/>
            <person name="Glavina del Rio T."/>
            <person name="Dalin E."/>
            <person name="Tice H."/>
            <person name="Bruce D."/>
            <person name="Goodwin L."/>
            <person name="Pitluck S."/>
            <person name="Kiss H."/>
            <person name="Brettin T."/>
            <person name="Detter J.C."/>
            <person name="Han C."/>
            <person name="Kuske C.R."/>
            <person name="Schmutz J."/>
            <person name="Larimer F."/>
            <person name="Land M."/>
            <person name="Hauser L."/>
            <person name="Kyrpides N."/>
            <person name="Lykidis A."/>
            <person name="Lovley D."/>
            <person name="Richardson P."/>
        </authorList>
    </citation>
    <scope>NUCLEOTIDE SEQUENCE [LARGE SCALE GENOMIC DNA]</scope>
    <source>
        <strain>ATCC BAA-1014 / DSM 16622 / JCM 12645 / Bem</strain>
    </source>
</reference>
<keyword id="KW-0963">Cytoplasm</keyword>
<keyword id="KW-0210">Decarboxylase</keyword>
<keyword id="KW-0456">Lyase</keyword>
<keyword id="KW-0627">Porphyrin biosynthesis</keyword>
<keyword id="KW-1185">Reference proteome</keyword>
<sequence>MNTRFLDACWGKPVDTVPVWLMRQAGRYLPDYMRVRSKCTFLELCKTPELATEVTVQPVDILGVDAAILFSDILTPIEPMGMELDFTPGPVFAKPIRTMADVEALKIPKMETDVPYVLDAVKLLRKELATKVPLIGFGGAPFTLACYMVEGKGSKDFAALKKMMYADPEVYAALMDKITTMDMEYLNAQIKAGAQAIQIFDTWGGMLSPADYERYVLPYTQRLINGLDRTNIPVIHFVKGAGTMLEIVKQAGGDVMGLDWHVNLGKARDILGDMAVQGNLDPTVLFAPNEIIEREVKRVLDENAGRPGLIFNLGHGILPTVPPEKAIFMVDCVHRLSRK</sequence>
<accession>B5E7R1</accession>
<evidence type="ECO:0000255" key="1">
    <source>
        <dbReference type="HAMAP-Rule" id="MF_00218"/>
    </source>
</evidence>